<sequence>MIQMQTNLDVADNSGARRVMCIKVLGGSKRRYATVGDIIVVSIKEAIPRGKVKKGDVMKAVVVRVSKDIRRADGSVIRFDRNAAVLINNQSEPVGTRIFGPVPRELRAKNHMKIISLAPEVL</sequence>
<dbReference type="EMBL" id="CP000115">
    <property type="protein sequence ID" value="ABA04635.1"/>
    <property type="molecule type" value="Genomic_DNA"/>
</dbReference>
<dbReference type="RefSeq" id="WP_009797128.1">
    <property type="nucleotide sequence ID" value="NC_007406.1"/>
</dbReference>
<dbReference type="SMR" id="Q3SSV6"/>
<dbReference type="STRING" id="323098.Nwi_1374"/>
<dbReference type="KEGG" id="nwi:Nwi_1374"/>
<dbReference type="eggNOG" id="COG0093">
    <property type="taxonomic scope" value="Bacteria"/>
</dbReference>
<dbReference type="HOGENOM" id="CLU_095071_2_1_5"/>
<dbReference type="OrthoDB" id="9806379at2"/>
<dbReference type="Proteomes" id="UP000002531">
    <property type="component" value="Chromosome"/>
</dbReference>
<dbReference type="GO" id="GO:0022625">
    <property type="term" value="C:cytosolic large ribosomal subunit"/>
    <property type="evidence" value="ECO:0007669"/>
    <property type="project" value="TreeGrafter"/>
</dbReference>
<dbReference type="GO" id="GO:0070180">
    <property type="term" value="F:large ribosomal subunit rRNA binding"/>
    <property type="evidence" value="ECO:0007669"/>
    <property type="project" value="TreeGrafter"/>
</dbReference>
<dbReference type="GO" id="GO:0003735">
    <property type="term" value="F:structural constituent of ribosome"/>
    <property type="evidence" value="ECO:0007669"/>
    <property type="project" value="InterPro"/>
</dbReference>
<dbReference type="GO" id="GO:0006412">
    <property type="term" value="P:translation"/>
    <property type="evidence" value="ECO:0007669"/>
    <property type="project" value="UniProtKB-UniRule"/>
</dbReference>
<dbReference type="CDD" id="cd00337">
    <property type="entry name" value="Ribosomal_uL14"/>
    <property type="match status" value="1"/>
</dbReference>
<dbReference type="FunFam" id="2.40.150.20:FF:000001">
    <property type="entry name" value="50S ribosomal protein L14"/>
    <property type="match status" value="1"/>
</dbReference>
<dbReference type="Gene3D" id="2.40.150.20">
    <property type="entry name" value="Ribosomal protein L14"/>
    <property type="match status" value="1"/>
</dbReference>
<dbReference type="HAMAP" id="MF_01367">
    <property type="entry name" value="Ribosomal_uL14"/>
    <property type="match status" value="1"/>
</dbReference>
<dbReference type="InterPro" id="IPR000218">
    <property type="entry name" value="Ribosomal_uL14"/>
</dbReference>
<dbReference type="InterPro" id="IPR005745">
    <property type="entry name" value="Ribosomal_uL14_bac-type"/>
</dbReference>
<dbReference type="InterPro" id="IPR019972">
    <property type="entry name" value="Ribosomal_uL14_CS"/>
</dbReference>
<dbReference type="InterPro" id="IPR036853">
    <property type="entry name" value="Ribosomal_uL14_sf"/>
</dbReference>
<dbReference type="NCBIfam" id="TIGR01067">
    <property type="entry name" value="rplN_bact"/>
    <property type="match status" value="1"/>
</dbReference>
<dbReference type="PANTHER" id="PTHR11761">
    <property type="entry name" value="50S/60S RIBOSOMAL PROTEIN L14/L23"/>
    <property type="match status" value="1"/>
</dbReference>
<dbReference type="PANTHER" id="PTHR11761:SF3">
    <property type="entry name" value="LARGE RIBOSOMAL SUBUNIT PROTEIN UL14M"/>
    <property type="match status" value="1"/>
</dbReference>
<dbReference type="Pfam" id="PF00238">
    <property type="entry name" value="Ribosomal_L14"/>
    <property type="match status" value="1"/>
</dbReference>
<dbReference type="SMART" id="SM01374">
    <property type="entry name" value="Ribosomal_L14"/>
    <property type="match status" value="1"/>
</dbReference>
<dbReference type="SUPFAM" id="SSF50193">
    <property type="entry name" value="Ribosomal protein L14"/>
    <property type="match status" value="1"/>
</dbReference>
<dbReference type="PROSITE" id="PS00049">
    <property type="entry name" value="RIBOSOMAL_L14"/>
    <property type="match status" value="1"/>
</dbReference>
<feature type="chain" id="PRO_0000266513" description="Large ribosomal subunit protein uL14">
    <location>
        <begin position="1"/>
        <end position="122"/>
    </location>
</feature>
<reference key="1">
    <citation type="journal article" date="2006" name="Appl. Environ. Microbiol.">
        <title>Genome sequence of the chemolithoautotrophic nitrite-oxidizing bacterium Nitrobacter winogradskyi Nb-255.</title>
        <authorList>
            <person name="Starkenburg S.R."/>
            <person name="Chain P.S.G."/>
            <person name="Sayavedra-Soto L.A."/>
            <person name="Hauser L."/>
            <person name="Land M.L."/>
            <person name="Larimer F.W."/>
            <person name="Malfatti S.A."/>
            <person name="Klotz M.G."/>
            <person name="Bottomley P.J."/>
            <person name="Arp D.J."/>
            <person name="Hickey W.J."/>
        </authorList>
    </citation>
    <scope>NUCLEOTIDE SEQUENCE [LARGE SCALE GENOMIC DNA]</scope>
    <source>
        <strain>ATCC 25391 / DSM 10237 / CIP 104748 / NCIMB 11846 / Nb-255</strain>
    </source>
</reference>
<proteinExistence type="inferred from homology"/>
<gene>
    <name evidence="1" type="primary">rplN</name>
    <name type="ordered locus">Nwi_1374</name>
</gene>
<comment type="function">
    <text evidence="1">Binds to 23S rRNA. Forms part of two intersubunit bridges in the 70S ribosome.</text>
</comment>
<comment type="subunit">
    <text evidence="1">Part of the 50S ribosomal subunit. Forms a cluster with proteins L3 and L19. In the 70S ribosome, L14 and L19 interact and together make contacts with the 16S rRNA in bridges B5 and B8.</text>
</comment>
<comment type="similarity">
    <text evidence="1">Belongs to the universal ribosomal protein uL14 family.</text>
</comment>
<keyword id="KW-1185">Reference proteome</keyword>
<keyword id="KW-0687">Ribonucleoprotein</keyword>
<keyword id="KW-0689">Ribosomal protein</keyword>
<keyword id="KW-0694">RNA-binding</keyword>
<keyword id="KW-0699">rRNA-binding</keyword>
<name>RL14_NITWN</name>
<protein>
    <recommendedName>
        <fullName evidence="1">Large ribosomal subunit protein uL14</fullName>
    </recommendedName>
    <alternativeName>
        <fullName evidence="2">50S ribosomal protein L14</fullName>
    </alternativeName>
</protein>
<evidence type="ECO:0000255" key="1">
    <source>
        <dbReference type="HAMAP-Rule" id="MF_01367"/>
    </source>
</evidence>
<evidence type="ECO:0000305" key="2"/>
<organism>
    <name type="scientific">Nitrobacter winogradskyi (strain ATCC 25391 / DSM 10237 / CIP 104748 / NCIMB 11846 / Nb-255)</name>
    <dbReference type="NCBI Taxonomy" id="323098"/>
    <lineage>
        <taxon>Bacteria</taxon>
        <taxon>Pseudomonadati</taxon>
        <taxon>Pseudomonadota</taxon>
        <taxon>Alphaproteobacteria</taxon>
        <taxon>Hyphomicrobiales</taxon>
        <taxon>Nitrobacteraceae</taxon>
        <taxon>Nitrobacter</taxon>
    </lineage>
</organism>
<accession>Q3SSV6</accession>